<keyword id="KW-0067">ATP-binding</keyword>
<keyword id="KW-0175">Coiled coil</keyword>
<keyword id="KW-0347">Helicase</keyword>
<keyword id="KW-0378">Hydrolase</keyword>
<keyword id="KW-0547">Nucleotide-binding</keyword>
<keyword id="KW-0539">Nucleus</keyword>
<keyword id="KW-1185">Reference proteome</keyword>
<keyword id="KW-0690">Ribosome biogenesis</keyword>
<keyword id="KW-0694">RNA-binding</keyword>
<proteinExistence type="inferred from homology"/>
<gene>
    <name type="primary">DRS1</name>
    <name type="ORF">PGUG_03914</name>
</gene>
<comment type="function">
    <text evidence="1">ATP-binding RNA helicase involved in ribosome assembly.</text>
</comment>
<comment type="catalytic activity">
    <reaction>
        <text>ATP + H2O = ADP + phosphate + H(+)</text>
        <dbReference type="Rhea" id="RHEA:13065"/>
        <dbReference type="ChEBI" id="CHEBI:15377"/>
        <dbReference type="ChEBI" id="CHEBI:15378"/>
        <dbReference type="ChEBI" id="CHEBI:30616"/>
        <dbReference type="ChEBI" id="CHEBI:43474"/>
        <dbReference type="ChEBI" id="CHEBI:456216"/>
        <dbReference type="EC" id="3.6.4.13"/>
    </reaction>
</comment>
<comment type="subunit">
    <text evidence="1">Associates with pre-ribosomal particles.</text>
</comment>
<comment type="subcellular location">
    <subcellularLocation>
        <location evidence="1">Nucleus</location>
        <location evidence="1">Nucleolus</location>
    </subcellularLocation>
</comment>
<comment type="domain">
    <text>The Q motif is unique to and characteristic of the DEAD box family of RNA helicases and controls ATP binding and hydrolysis.</text>
</comment>
<comment type="similarity">
    <text evidence="6">Belongs to the DEAD box helicase family. DDX27/DRS1 subfamily.</text>
</comment>
<feature type="chain" id="PRO_0000294642" description="ATP-dependent RNA helicase DRS1">
    <location>
        <begin position="1"/>
        <end position="705"/>
    </location>
</feature>
<feature type="domain" description="Helicase ATP-binding" evidence="3">
    <location>
        <begin position="229"/>
        <end position="405"/>
    </location>
</feature>
<feature type="domain" description="Helicase C-terminal" evidence="4">
    <location>
        <begin position="416"/>
        <end position="588"/>
    </location>
</feature>
<feature type="region of interest" description="Disordered" evidence="5">
    <location>
        <begin position="36"/>
        <end position="56"/>
    </location>
</feature>
<feature type="region of interest" description="Disordered" evidence="5">
    <location>
        <begin position="90"/>
        <end position="178"/>
    </location>
</feature>
<feature type="region of interest" description="Disordered" evidence="5">
    <location>
        <begin position="631"/>
        <end position="705"/>
    </location>
</feature>
<feature type="coiled-coil region" evidence="2">
    <location>
        <begin position="97"/>
        <end position="178"/>
    </location>
</feature>
<feature type="short sequence motif" description="Q motif">
    <location>
        <begin position="198"/>
        <end position="226"/>
    </location>
</feature>
<feature type="short sequence motif" description="DEAD box">
    <location>
        <begin position="352"/>
        <end position="355"/>
    </location>
</feature>
<feature type="compositionally biased region" description="Acidic residues" evidence="5">
    <location>
        <begin position="37"/>
        <end position="48"/>
    </location>
</feature>
<feature type="compositionally biased region" description="Acidic residues" evidence="5">
    <location>
        <begin position="103"/>
        <end position="136"/>
    </location>
</feature>
<feature type="compositionally biased region" description="Acidic residues" evidence="5">
    <location>
        <begin position="145"/>
        <end position="178"/>
    </location>
</feature>
<feature type="compositionally biased region" description="Polar residues" evidence="5">
    <location>
        <begin position="652"/>
        <end position="661"/>
    </location>
</feature>
<feature type="compositionally biased region" description="Basic residues" evidence="5">
    <location>
        <begin position="662"/>
        <end position="673"/>
    </location>
</feature>
<feature type="compositionally biased region" description="Basic and acidic residues" evidence="5">
    <location>
        <begin position="674"/>
        <end position="694"/>
    </location>
</feature>
<feature type="compositionally biased region" description="Basic residues" evidence="5">
    <location>
        <begin position="695"/>
        <end position="705"/>
    </location>
</feature>
<feature type="binding site" evidence="3">
    <location>
        <begin position="242"/>
        <end position="249"/>
    </location>
    <ligand>
        <name>ATP</name>
        <dbReference type="ChEBI" id="CHEBI:30616"/>
    </ligand>
</feature>
<name>DRS1_PICGU</name>
<accession>A5DKW3</accession>
<sequence>MHRYCRVGFRDEHRISHLTASTMAKKHRDDFVMTIDSDSEASDGGDSDTEQKTGDLNPDFVFGEAEETAFTGWDLDQKDVANHKDVDLDGILRSKGGLSGMIDGEEEEQKEEEEENEDNAEDEEEVNAGEDDEDLAMDGFGMGAEQEDDEEEENSEQENEHEAESEDEQEQEISENDEDSAAAIAEFYEESKTTEKITSFQALQLSRPLLKGVGNLGYTVPSAIQAASIPIAMMGKDIVAGAVTGSGKTAAYLIPIIERLIYKPAAVSATRVIVLTPTRELAIQVCDVGKKLGQFVANLNFGLAVGGLNLRQQEQQLKSRPDIVVATPGRLIDHIRNSPSFSIENLEVLVMDEADRMLEEGFQVELTEILELIPKHKRQTMLFSATMNTKIQDLIQLSLDKPVRIMVNPPKQAASKLVQEFVRIRKREHLKPALLYHLLRLVDPQQQNRIVVFVSRKEMAHRLRIVLGLLGMKVSELHGSLTQEQRLQSVKDFRSLAVPVLICTDLAARGLDIPKIEIVINFDMPKTHEIYLHRVGRTARAGREGRSITFVGESNQDRSIVKDAIKSLEEQKNGKAVSRTVDWKKVEELNSIVESKKDTIDEVLEEEKSAKEILQAEMQLEKASNIMKHEKEIHSRPKRTWFQSEQEKKQAQRTPVMQSLTKHGKKVNSKKRKAHEERKEEKRSYKKTKSDRSAPKTKAKSKKRK</sequence>
<evidence type="ECO:0000250" key="1"/>
<evidence type="ECO:0000255" key="2"/>
<evidence type="ECO:0000255" key="3">
    <source>
        <dbReference type="PROSITE-ProRule" id="PRU00541"/>
    </source>
</evidence>
<evidence type="ECO:0000255" key="4">
    <source>
        <dbReference type="PROSITE-ProRule" id="PRU00542"/>
    </source>
</evidence>
<evidence type="ECO:0000256" key="5">
    <source>
        <dbReference type="SAM" id="MobiDB-lite"/>
    </source>
</evidence>
<evidence type="ECO:0000305" key="6"/>
<dbReference type="EC" id="3.6.4.13"/>
<dbReference type="EMBL" id="CH408158">
    <property type="protein sequence ID" value="EDK39816.2"/>
    <property type="molecule type" value="Genomic_DNA"/>
</dbReference>
<dbReference type="RefSeq" id="XP_001484533.1">
    <property type="nucleotide sequence ID" value="XM_001484483.1"/>
</dbReference>
<dbReference type="SMR" id="A5DKW3"/>
<dbReference type="FunCoup" id="A5DKW3">
    <property type="interactions" value="922"/>
</dbReference>
<dbReference type="STRING" id="294746.A5DKW3"/>
<dbReference type="GeneID" id="5126441"/>
<dbReference type="KEGG" id="pgu:PGUG_03914"/>
<dbReference type="VEuPathDB" id="FungiDB:PGUG_03914"/>
<dbReference type="eggNOG" id="KOG0338">
    <property type="taxonomic scope" value="Eukaryota"/>
</dbReference>
<dbReference type="HOGENOM" id="CLU_003041_3_2_1"/>
<dbReference type="InParanoid" id="A5DKW3"/>
<dbReference type="OMA" id="MIDPPKQ"/>
<dbReference type="OrthoDB" id="10259843at2759"/>
<dbReference type="Proteomes" id="UP000001997">
    <property type="component" value="Unassembled WGS sequence"/>
</dbReference>
<dbReference type="GO" id="GO:0005829">
    <property type="term" value="C:cytosol"/>
    <property type="evidence" value="ECO:0007669"/>
    <property type="project" value="TreeGrafter"/>
</dbReference>
<dbReference type="GO" id="GO:0005730">
    <property type="term" value="C:nucleolus"/>
    <property type="evidence" value="ECO:0007669"/>
    <property type="project" value="UniProtKB-SubCell"/>
</dbReference>
<dbReference type="GO" id="GO:0030687">
    <property type="term" value="C:preribosome, large subunit precursor"/>
    <property type="evidence" value="ECO:0007669"/>
    <property type="project" value="EnsemblFungi"/>
</dbReference>
<dbReference type="GO" id="GO:0005524">
    <property type="term" value="F:ATP binding"/>
    <property type="evidence" value="ECO:0007669"/>
    <property type="project" value="UniProtKB-KW"/>
</dbReference>
<dbReference type="GO" id="GO:0016887">
    <property type="term" value="F:ATP hydrolysis activity"/>
    <property type="evidence" value="ECO:0007669"/>
    <property type="project" value="RHEA"/>
</dbReference>
<dbReference type="GO" id="GO:0003723">
    <property type="term" value="F:RNA binding"/>
    <property type="evidence" value="ECO:0007669"/>
    <property type="project" value="UniProtKB-KW"/>
</dbReference>
<dbReference type="GO" id="GO:0003724">
    <property type="term" value="F:RNA helicase activity"/>
    <property type="evidence" value="ECO:0007669"/>
    <property type="project" value="UniProtKB-EC"/>
</dbReference>
<dbReference type="GO" id="GO:0000027">
    <property type="term" value="P:ribosomal large subunit assembly"/>
    <property type="evidence" value="ECO:0007669"/>
    <property type="project" value="EnsemblFungi"/>
</dbReference>
<dbReference type="GO" id="GO:0006364">
    <property type="term" value="P:rRNA processing"/>
    <property type="evidence" value="ECO:0007669"/>
    <property type="project" value="EnsemblFungi"/>
</dbReference>
<dbReference type="CDD" id="cd17947">
    <property type="entry name" value="DEADc_DDX27"/>
    <property type="match status" value="1"/>
</dbReference>
<dbReference type="CDD" id="cd18787">
    <property type="entry name" value="SF2_C_DEAD"/>
    <property type="match status" value="1"/>
</dbReference>
<dbReference type="FunFam" id="3.40.50.300:FF:000842">
    <property type="entry name" value="ATP-dependent RNA helicase DRS1"/>
    <property type="match status" value="1"/>
</dbReference>
<dbReference type="Gene3D" id="3.40.50.300">
    <property type="entry name" value="P-loop containing nucleotide triphosphate hydrolases"/>
    <property type="match status" value="2"/>
</dbReference>
<dbReference type="InterPro" id="IPR011545">
    <property type="entry name" value="DEAD/DEAH_box_helicase_dom"/>
</dbReference>
<dbReference type="InterPro" id="IPR050079">
    <property type="entry name" value="DEAD_box_RNA_helicase"/>
</dbReference>
<dbReference type="InterPro" id="IPR014001">
    <property type="entry name" value="Helicase_ATP-bd"/>
</dbReference>
<dbReference type="InterPro" id="IPR001650">
    <property type="entry name" value="Helicase_C-like"/>
</dbReference>
<dbReference type="InterPro" id="IPR027417">
    <property type="entry name" value="P-loop_NTPase"/>
</dbReference>
<dbReference type="InterPro" id="IPR000629">
    <property type="entry name" value="RNA-helicase_DEAD-box_CS"/>
</dbReference>
<dbReference type="InterPro" id="IPR014014">
    <property type="entry name" value="RNA_helicase_DEAD_Q_motif"/>
</dbReference>
<dbReference type="PANTHER" id="PTHR47959:SF1">
    <property type="entry name" value="ATP-DEPENDENT RNA HELICASE DBPA"/>
    <property type="match status" value="1"/>
</dbReference>
<dbReference type="PANTHER" id="PTHR47959">
    <property type="entry name" value="ATP-DEPENDENT RNA HELICASE RHLE-RELATED"/>
    <property type="match status" value="1"/>
</dbReference>
<dbReference type="Pfam" id="PF00270">
    <property type="entry name" value="DEAD"/>
    <property type="match status" value="1"/>
</dbReference>
<dbReference type="Pfam" id="PF00271">
    <property type="entry name" value="Helicase_C"/>
    <property type="match status" value="1"/>
</dbReference>
<dbReference type="SMART" id="SM00487">
    <property type="entry name" value="DEXDc"/>
    <property type="match status" value="1"/>
</dbReference>
<dbReference type="SMART" id="SM00490">
    <property type="entry name" value="HELICc"/>
    <property type="match status" value="1"/>
</dbReference>
<dbReference type="SUPFAM" id="SSF52540">
    <property type="entry name" value="P-loop containing nucleoside triphosphate hydrolases"/>
    <property type="match status" value="1"/>
</dbReference>
<dbReference type="PROSITE" id="PS00039">
    <property type="entry name" value="DEAD_ATP_HELICASE"/>
    <property type="match status" value="1"/>
</dbReference>
<dbReference type="PROSITE" id="PS51192">
    <property type="entry name" value="HELICASE_ATP_BIND_1"/>
    <property type="match status" value="1"/>
</dbReference>
<dbReference type="PROSITE" id="PS51194">
    <property type="entry name" value="HELICASE_CTER"/>
    <property type="match status" value="1"/>
</dbReference>
<dbReference type="PROSITE" id="PS51195">
    <property type="entry name" value="Q_MOTIF"/>
    <property type="match status" value="1"/>
</dbReference>
<reference key="1">
    <citation type="journal article" date="2009" name="Nature">
        <title>Evolution of pathogenicity and sexual reproduction in eight Candida genomes.</title>
        <authorList>
            <person name="Butler G."/>
            <person name="Rasmussen M.D."/>
            <person name="Lin M.F."/>
            <person name="Santos M.A.S."/>
            <person name="Sakthikumar S."/>
            <person name="Munro C.A."/>
            <person name="Rheinbay E."/>
            <person name="Grabherr M."/>
            <person name="Forche A."/>
            <person name="Reedy J.L."/>
            <person name="Agrafioti I."/>
            <person name="Arnaud M.B."/>
            <person name="Bates S."/>
            <person name="Brown A.J.P."/>
            <person name="Brunke S."/>
            <person name="Costanzo M.C."/>
            <person name="Fitzpatrick D.A."/>
            <person name="de Groot P.W.J."/>
            <person name="Harris D."/>
            <person name="Hoyer L.L."/>
            <person name="Hube B."/>
            <person name="Klis F.M."/>
            <person name="Kodira C."/>
            <person name="Lennard N."/>
            <person name="Logue M.E."/>
            <person name="Martin R."/>
            <person name="Neiman A.M."/>
            <person name="Nikolaou E."/>
            <person name="Quail M.A."/>
            <person name="Quinn J."/>
            <person name="Santos M.C."/>
            <person name="Schmitzberger F.F."/>
            <person name="Sherlock G."/>
            <person name="Shah P."/>
            <person name="Silverstein K.A.T."/>
            <person name="Skrzypek M.S."/>
            <person name="Soll D."/>
            <person name="Staggs R."/>
            <person name="Stansfield I."/>
            <person name="Stumpf M.P.H."/>
            <person name="Sudbery P.E."/>
            <person name="Srikantha T."/>
            <person name="Zeng Q."/>
            <person name="Berman J."/>
            <person name="Berriman M."/>
            <person name="Heitman J."/>
            <person name="Gow N.A.R."/>
            <person name="Lorenz M.C."/>
            <person name="Birren B.W."/>
            <person name="Kellis M."/>
            <person name="Cuomo C.A."/>
        </authorList>
    </citation>
    <scope>NUCLEOTIDE SEQUENCE [LARGE SCALE GENOMIC DNA]</scope>
    <source>
        <strain>ATCC 6260 / CBS 566 / DSM 6381 / JCM 1539 / NBRC 10279 / NRRL Y-324</strain>
    </source>
</reference>
<protein>
    <recommendedName>
        <fullName>ATP-dependent RNA helicase DRS1</fullName>
        <ecNumber>3.6.4.13</ecNumber>
    </recommendedName>
</protein>
<organism>
    <name type="scientific">Meyerozyma guilliermondii (strain ATCC 6260 / CBS 566 / DSM 6381 / JCM 1539 / NBRC 10279 / NRRL Y-324)</name>
    <name type="common">Yeast</name>
    <name type="synonym">Candida guilliermondii</name>
    <dbReference type="NCBI Taxonomy" id="294746"/>
    <lineage>
        <taxon>Eukaryota</taxon>
        <taxon>Fungi</taxon>
        <taxon>Dikarya</taxon>
        <taxon>Ascomycota</taxon>
        <taxon>Saccharomycotina</taxon>
        <taxon>Pichiomycetes</taxon>
        <taxon>Debaryomycetaceae</taxon>
        <taxon>Meyerozyma</taxon>
    </lineage>
</organism>